<proteinExistence type="evidence at protein level"/>
<comment type="function">
    <text>Protein kinase that plays an important role in mitotic regulation. Seems to be phosphorylated and thereby activated by CDC2/cyclin B during mitotic activation. It is also required for spindle formation and for nuclear envelope breakdown.</text>
</comment>
<comment type="catalytic activity">
    <reaction>
        <text>L-seryl-[protein] + ATP = O-phospho-L-seryl-[protein] + ADP + H(+)</text>
        <dbReference type="Rhea" id="RHEA:17989"/>
        <dbReference type="Rhea" id="RHEA-COMP:9863"/>
        <dbReference type="Rhea" id="RHEA-COMP:11604"/>
        <dbReference type="ChEBI" id="CHEBI:15378"/>
        <dbReference type="ChEBI" id="CHEBI:29999"/>
        <dbReference type="ChEBI" id="CHEBI:30616"/>
        <dbReference type="ChEBI" id="CHEBI:83421"/>
        <dbReference type="ChEBI" id="CHEBI:456216"/>
        <dbReference type="EC" id="2.7.11.1"/>
    </reaction>
</comment>
<comment type="catalytic activity">
    <reaction>
        <text>L-threonyl-[protein] + ATP = O-phospho-L-threonyl-[protein] + ADP + H(+)</text>
        <dbReference type="Rhea" id="RHEA:46608"/>
        <dbReference type="Rhea" id="RHEA-COMP:11060"/>
        <dbReference type="Rhea" id="RHEA-COMP:11605"/>
        <dbReference type="ChEBI" id="CHEBI:15378"/>
        <dbReference type="ChEBI" id="CHEBI:30013"/>
        <dbReference type="ChEBI" id="CHEBI:30616"/>
        <dbReference type="ChEBI" id="CHEBI:61977"/>
        <dbReference type="ChEBI" id="CHEBI:456216"/>
        <dbReference type="EC" id="2.7.11.1"/>
    </reaction>
</comment>
<comment type="subcellular location">
    <subcellularLocation>
        <location evidence="5">Nucleus</location>
    </subcellularLocation>
</comment>
<comment type="developmental stage">
    <text>Accumulates when cells are arrested in G2 and is degraded as cells traverse mitosis.</text>
</comment>
<comment type="PTM">
    <text evidence="4">Recessive mutations of NIMA cause a specific cell cycle block in G2 at restrictive temperature due to lack of phosphorylation that normally activates the G2-kinase.</text>
</comment>
<comment type="similarity">
    <text evidence="5">Belongs to the protein kinase superfamily. CAMK Ser/Thr protein kinase family.</text>
</comment>
<reference key="1">
    <citation type="journal article" date="1988" name="Cell">
        <title>Mitotic induction and maintenance by overexpression of a G2-specific gene that encodes a potential protein kinase.</title>
        <authorList>
            <person name="Osmani S.A."/>
            <person name="Pu R.T."/>
            <person name="Morris N.R."/>
        </authorList>
    </citation>
    <scope>NUCLEOTIDE SEQUENCE [MRNA]</scope>
</reference>
<reference key="2">
    <citation type="journal article" date="2005" name="Nature">
        <title>Sequencing of Aspergillus nidulans and comparative analysis with A. fumigatus and A. oryzae.</title>
        <authorList>
            <person name="Galagan J.E."/>
            <person name="Calvo S.E."/>
            <person name="Cuomo C."/>
            <person name="Ma L.-J."/>
            <person name="Wortman J.R."/>
            <person name="Batzoglou S."/>
            <person name="Lee S.-I."/>
            <person name="Bastuerkmen M."/>
            <person name="Spevak C.C."/>
            <person name="Clutterbuck J."/>
            <person name="Kapitonov V."/>
            <person name="Jurka J."/>
            <person name="Scazzocchio C."/>
            <person name="Farman M.L."/>
            <person name="Butler J."/>
            <person name="Purcell S."/>
            <person name="Harris S."/>
            <person name="Braus G.H."/>
            <person name="Draht O."/>
            <person name="Busch S."/>
            <person name="D'Enfert C."/>
            <person name="Bouchier C."/>
            <person name="Goldman G.H."/>
            <person name="Bell-Pedersen D."/>
            <person name="Griffiths-Jones S."/>
            <person name="Doonan J.H."/>
            <person name="Yu J."/>
            <person name="Vienken K."/>
            <person name="Pain A."/>
            <person name="Freitag M."/>
            <person name="Selker E.U."/>
            <person name="Archer D.B."/>
            <person name="Penalva M.A."/>
            <person name="Oakley B.R."/>
            <person name="Momany M."/>
            <person name="Tanaka T."/>
            <person name="Kumagai T."/>
            <person name="Asai K."/>
            <person name="Machida M."/>
            <person name="Nierman W.C."/>
            <person name="Denning D.W."/>
            <person name="Caddick M.X."/>
            <person name="Hynes M."/>
            <person name="Paoletti M."/>
            <person name="Fischer R."/>
            <person name="Miller B.L."/>
            <person name="Dyer P.S."/>
            <person name="Sachs M.S."/>
            <person name="Osmani S.A."/>
            <person name="Birren B.W."/>
        </authorList>
    </citation>
    <scope>NUCLEOTIDE SEQUENCE [LARGE SCALE GENOMIC DNA]</scope>
    <source>
        <strain>FGSC A4 / ATCC 38163 / CBS 112.46 / NRRL 194 / M139</strain>
    </source>
</reference>
<reference key="3">
    <citation type="journal article" date="2009" name="Fungal Genet. Biol.">
        <title>The 2008 update of the Aspergillus nidulans genome annotation: a community effort.</title>
        <authorList>
            <person name="Wortman J.R."/>
            <person name="Gilsenan J.M."/>
            <person name="Joardar V."/>
            <person name="Deegan J."/>
            <person name="Clutterbuck J."/>
            <person name="Andersen M.R."/>
            <person name="Archer D."/>
            <person name="Bencina M."/>
            <person name="Braus G."/>
            <person name="Coutinho P."/>
            <person name="von Dohren H."/>
            <person name="Doonan J."/>
            <person name="Driessen A.J."/>
            <person name="Durek P."/>
            <person name="Espeso E."/>
            <person name="Fekete E."/>
            <person name="Flipphi M."/>
            <person name="Estrada C.G."/>
            <person name="Geysens S."/>
            <person name="Goldman G."/>
            <person name="de Groot P.W."/>
            <person name="Hansen K."/>
            <person name="Harris S.D."/>
            <person name="Heinekamp T."/>
            <person name="Helmstaedt K."/>
            <person name="Henrissat B."/>
            <person name="Hofmann G."/>
            <person name="Homan T."/>
            <person name="Horio T."/>
            <person name="Horiuchi H."/>
            <person name="James S."/>
            <person name="Jones M."/>
            <person name="Karaffa L."/>
            <person name="Karanyi Z."/>
            <person name="Kato M."/>
            <person name="Keller N."/>
            <person name="Kelly D.E."/>
            <person name="Kiel J.A."/>
            <person name="Kim J.M."/>
            <person name="van der Klei I.J."/>
            <person name="Klis F.M."/>
            <person name="Kovalchuk A."/>
            <person name="Krasevec N."/>
            <person name="Kubicek C.P."/>
            <person name="Liu B."/>
            <person name="Maccabe A."/>
            <person name="Meyer V."/>
            <person name="Mirabito P."/>
            <person name="Miskei M."/>
            <person name="Mos M."/>
            <person name="Mullins J."/>
            <person name="Nelson D.R."/>
            <person name="Nielsen J."/>
            <person name="Oakley B.R."/>
            <person name="Osmani S.A."/>
            <person name="Pakula T."/>
            <person name="Paszewski A."/>
            <person name="Paulsen I."/>
            <person name="Pilsyk S."/>
            <person name="Pocsi I."/>
            <person name="Punt P.J."/>
            <person name="Ram A.F."/>
            <person name="Ren Q."/>
            <person name="Robellet X."/>
            <person name="Robson G."/>
            <person name="Seiboth B."/>
            <person name="van Solingen P."/>
            <person name="Specht T."/>
            <person name="Sun J."/>
            <person name="Taheri-Talesh N."/>
            <person name="Takeshita N."/>
            <person name="Ussery D."/>
            <person name="vanKuyk P.A."/>
            <person name="Visser H."/>
            <person name="van de Vondervoort P.J."/>
            <person name="de Vries R.P."/>
            <person name="Walton J."/>
            <person name="Xiang X."/>
            <person name="Xiong Y."/>
            <person name="Zeng A.P."/>
            <person name="Brandt B.W."/>
            <person name="Cornell M.J."/>
            <person name="van den Hondel C.A."/>
            <person name="Visser J."/>
            <person name="Oliver S.G."/>
            <person name="Turner G."/>
        </authorList>
    </citation>
    <scope>GENOME REANNOTATION</scope>
    <source>
        <strain>FGSC A4 / ATCC 38163 / CBS 112.46 / NRRL 194 / M139</strain>
    </source>
</reference>
<reference key="4">
    <citation type="journal article" date="1995" name="EMBO J.">
        <title>Mitotic destruction of the cell cycle regulated NIMA protein kinase of Aspergillus nidulans is required for mitotic exit.</title>
        <authorList>
            <person name="Pu R.T."/>
            <person name="Osmani S.A."/>
        </authorList>
    </citation>
    <scope>CHARACTERIZATION</scope>
</reference>
<reference key="5">
    <citation type="journal article" date="1995" name="J. Biol. Chem.">
        <title>Isolation of a functional homolog of the cell cycle-specific NIMA protein kinase of Aspergillus nidulans and functional analysis of conserved residues.</title>
        <authorList>
            <person name="Pu R.T."/>
            <person name="Xu G."/>
            <person name="Wu L."/>
            <person name="Vierula J."/>
            <person name="O'Donnell K."/>
            <person name="Ye X.S."/>
            <person name="Osmani S.A."/>
        </authorList>
    </citation>
    <scope>PHOSPHORYLATION AT THR-199</scope>
    <scope>MUTAGENESIS OF CYS-38; GLU-41; TYR-91; THR-199 AND LEU-304</scope>
</reference>
<protein>
    <recommendedName>
        <fullName>G2-specific protein kinase nimA</fullName>
        <ecNumber>2.7.11.1</ecNumber>
    </recommendedName>
    <alternativeName>
        <fullName>Never in mitosis</fullName>
    </alternativeName>
</protein>
<sequence length="699" mass="78913">MAIALAEADKYEVLEKIGCGSFGIIRKVKRKSDGFILCRKEINYIKMSTKEREQLTAEFNILSSLRHPNIVAYYHREHLKASQDLYLYMEYCGGGDLSMVIKNLKRTNKYAEEDFVWRILSQLVTALYRCHYGTDPAEVGSNLLGPAPKPSGLKGKQAQMTILHRDLKPENIFLGSDNTVKLGDFGLSKLMHSHDFASTYVGTPFYMSPEICAAEKYTLRSDIWAVGCIMYELCQREPPFNARTHIQLVQKIREGKFAPLPDFYSSELKNVIASCLRVNPDHRPDTATLINTPVIRLMRREVELNNLSRAARKREEATMQKAKDVEQAFAKLEKEKQQIRSELENSIRREWEVKARLEIDRQVQNELDKLRKRFECEVQDRVAQEVEKQRRNANYREDASLRSSGHSSQMSSSNSEDSDFPSSTDISQLSLESPTNKAAKLPKKESRTPFTRSKTVVDSPMDIQMAEPSPISIASLSLSPRRTSATYSGKNIFAEGERKRPKFEPTLAYSDDEDDTPELPSPTRPKVKPDPFKAPSRPLLRQNTTALMQKLSTQPPIFPANPSRLPQMSAPDVRESKSRSPHRRLSKIPSSANLAADAGSPTRKNGVKSSPSKMNGGDEMFKAVMQRNMGGRTLVELAQARAGGRPIDEVKRCASDSRSGCSVPMKSADRDPPAVWDPERDEMPSPFLARGRKVIRNLR</sequence>
<dbReference type="EC" id="2.7.11.1"/>
<dbReference type="EMBL" id="M20249">
    <property type="protein sequence ID" value="AAA33316.1"/>
    <property type="molecule type" value="mRNA"/>
</dbReference>
<dbReference type="EMBL" id="AACD01000214">
    <property type="protein sequence ID" value="EAA60031.1"/>
    <property type="molecule type" value="Genomic_DNA"/>
</dbReference>
<dbReference type="EMBL" id="BN001303">
    <property type="status" value="NOT_ANNOTATED_CDS"/>
    <property type="molecule type" value="Genomic_DNA"/>
</dbReference>
<dbReference type="PIR" id="A43734">
    <property type="entry name" value="A43734"/>
</dbReference>
<dbReference type="RefSeq" id="XP_868886.1">
    <property type="nucleotide sequence ID" value="XM_863793.1"/>
</dbReference>
<dbReference type="SMR" id="P11837"/>
<dbReference type="STRING" id="227321.P11837"/>
<dbReference type="iPTMnet" id="P11837"/>
<dbReference type="VEuPathDB" id="FungiDB:AN9504"/>
<dbReference type="HOGENOM" id="CLU_000288_63_23_1"/>
<dbReference type="InParanoid" id="P11837"/>
<dbReference type="BRENDA" id="2.7.11.22">
    <property type="organism ID" value="517"/>
</dbReference>
<dbReference type="Proteomes" id="UP000000560">
    <property type="component" value="Chromosome III"/>
</dbReference>
<dbReference type="GO" id="GO:0005737">
    <property type="term" value="C:cytoplasm"/>
    <property type="evidence" value="ECO:0000318"/>
    <property type="project" value="GO_Central"/>
</dbReference>
<dbReference type="GO" id="GO:0044732">
    <property type="term" value="C:mitotic spindle pole body"/>
    <property type="evidence" value="ECO:0000318"/>
    <property type="project" value="GO_Central"/>
</dbReference>
<dbReference type="GO" id="GO:0005634">
    <property type="term" value="C:nucleus"/>
    <property type="evidence" value="ECO:0000314"/>
    <property type="project" value="AspGD"/>
</dbReference>
<dbReference type="GO" id="GO:0005524">
    <property type="term" value="F:ATP binding"/>
    <property type="evidence" value="ECO:0007669"/>
    <property type="project" value="UniProtKB-KW"/>
</dbReference>
<dbReference type="GO" id="GO:0035175">
    <property type="term" value="F:histone H3S10 kinase activity"/>
    <property type="evidence" value="ECO:0000314"/>
    <property type="project" value="AspGD"/>
</dbReference>
<dbReference type="GO" id="GO:0004672">
    <property type="term" value="F:protein kinase activity"/>
    <property type="evidence" value="ECO:0000314"/>
    <property type="project" value="AspGD"/>
</dbReference>
<dbReference type="GO" id="GO:0106310">
    <property type="term" value="F:protein serine kinase activity"/>
    <property type="evidence" value="ECO:0007669"/>
    <property type="project" value="RHEA"/>
</dbReference>
<dbReference type="GO" id="GO:0004674">
    <property type="term" value="F:protein serine/threonine kinase activity"/>
    <property type="evidence" value="ECO:0000314"/>
    <property type="project" value="AspGD"/>
</dbReference>
<dbReference type="GO" id="GO:0051301">
    <property type="term" value="P:cell division"/>
    <property type="evidence" value="ECO:0007669"/>
    <property type="project" value="UniProtKB-KW"/>
</dbReference>
<dbReference type="GO" id="GO:0007059">
    <property type="term" value="P:chromosome segregation"/>
    <property type="evidence" value="ECO:0000315"/>
    <property type="project" value="AspGD"/>
</dbReference>
<dbReference type="GO" id="GO:0000086">
    <property type="term" value="P:G2/M transition of mitotic cell cycle"/>
    <property type="evidence" value="ECO:0000315"/>
    <property type="project" value="AspGD"/>
</dbReference>
<dbReference type="GO" id="GO:0045840">
    <property type="term" value="P:positive regulation of mitotic nuclear division"/>
    <property type="evidence" value="ECO:0000315"/>
    <property type="project" value="AspGD"/>
</dbReference>
<dbReference type="CDD" id="cd08217">
    <property type="entry name" value="STKc_Nek2"/>
    <property type="match status" value="1"/>
</dbReference>
<dbReference type="FunFam" id="3.30.200.20:FF:000369">
    <property type="entry name" value="G2-specific protein kinase NimA"/>
    <property type="match status" value="1"/>
</dbReference>
<dbReference type="FunFam" id="1.10.510.10:FF:000697">
    <property type="entry name" value="G2-specific protein kinase nimA"/>
    <property type="match status" value="1"/>
</dbReference>
<dbReference type="FunFam" id="3.30.200.20:FF:000151">
    <property type="entry name" value="G2-specific protein kinase nimA"/>
    <property type="match status" value="1"/>
</dbReference>
<dbReference type="Gene3D" id="3.30.200.20">
    <property type="entry name" value="Phosphorylase Kinase, domain 1"/>
    <property type="match status" value="2"/>
</dbReference>
<dbReference type="Gene3D" id="1.10.510.10">
    <property type="entry name" value="Transferase(Phosphotransferase) domain 1"/>
    <property type="match status" value="1"/>
</dbReference>
<dbReference type="InterPro" id="IPR011009">
    <property type="entry name" value="Kinase-like_dom_sf"/>
</dbReference>
<dbReference type="InterPro" id="IPR050660">
    <property type="entry name" value="NEK_Ser/Thr_kinase"/>
</dbReference>
<dbReference type="InterPro" id="IPR000719">
    <property type="entry name" value="Prot_kinase_dom"/>
</dbReference>
<dbReference type="InterPro" id="IPR008271">
    <property type="entry name" value="Ser/Thr_kinase_AS"/>
</dbReference>
<dbReference type="PANTHER" id="PTHR43671">
    <property type="entry name" value="SERINE/THREONINE-PROTEIN KINASE NEK"/>
    <property type="match status" value="1"/>
</dbReference>
<dbReference type="PANTHER" id="PTHR43671:SF13">
    <property type="entry name" value="SERINE_THREONINE-PROTEIN KINASE NEK2"/>
    <property type="match status" value="1"/>
</dbReference>
<dbReference type="Pfam" id="PF00069">
    <property type="entry name" value="Pkinase"/>
    <property type="match status" value="2"/>
</dbReference>
<dbReference type="SMART" id="SM00220">
    <property type="entry name" value="S_TKc"/>
    <property type="match status" value="1"/>
</dbReference>
<dbReference type="SUPFAM" id="SSF56112">
    <property type="entry name" value="Protein kinase-like (PK-like)"/>
    <property type="match status" value="1"/>
</dbReference>
<dbReference type="PROSITE" id="PS50011">
    <property type="entry name" value="PROTEIN_KINASE_DOM"/>
    <property type="match status" value="1"/>
</dbReference>
<dbReference type="PROSITE" id="PS00108">
    <property type="entry name" value="PROTEIN_KINASE_ST"/>
    <property type="match status" value="1"/>
</dbReference>
<keyword id="KW-0067">ATP-binding</keyword>
<keyword id="KW-0131">Cell cycle</keyword>
<keyword id="KW-0132">Cell division</keyword>
<keyword id="KW-0418">Kinase</keyword>
<keyword id="KW-0498">Mitosis</keyword>
<keyword id="KW-0547">Nucleotide-binding</keyword>
<keyword id="KW-0539">Nucleus</keyword>
<keyword id="KW-0597">Phosphoprotein</keyword>
<keyword id="KW-1185">Reference proteome</keyword>
<keyword id="KW-0723">Serine/threonine-protein kinase</keyword>
<keyword id="KW-0808">Transferase</keyword>
<accession>P11837</accession>
<accession>Q5AQC6</accession>
<gene>
    <name type="primary">nimA</name>
    <name type="ORF">AN9504</name>
</gene>
<organism>
    <name type="scientific">Emericella nidulans (strain FGSC A4 / ATCC 38163 / CBS 112.46 / NRRL 194 / M139)</name>
    <name type="common">Aspergillus nidulans</name>
    <dbReference type="NCBI Taxonomy" id="227321"/>
    <lineage>
        <taxon>Eukaryota</taxon>
        <taxon>Fungi</taxon>
        <taxon>Dikarya</taxon>
        <taxon>Ascomycota</taxon>
        <taxon>Pezizomycotina</taxon>
        <taxon>Eurotiomycetes</taxon>
        <taxon>Eurotiomycetidae</taxon>
        <taxon>Eurotiales</taxon>
        <taxon>Aspergillaceae</taxon>
        <taxon>Aspergillus</taxon>
        <taxon>Aspergillus subgen. Nidulantes</taxon>
    </lineage>
</organism>
<evidence type="ECO:0000255" key="1">
    <source>
        <dbReference type="PROSITE-ProRule" id="PRU00159"/>
    </source>
</evidence>
<evidence type="ECO:0000255" key="2">
    <source>
        <dbReference type="PROSITE-ProRule" id="PRU10027"/>
    </source>
</evidence>
<evidence type="ECO:0000256" key="3">
    <source>
        <dbReference type="SAM" id="MobiDB-lite"/>
    </source>
</evidence>
<evidence type="ECO:0000269" key="4">
    <source>
    </source>
</evidence>
<evidence type="ECO:0000305" key="5"/>
<feature type="chain" id="PRO_0000086443" description="G2-specific protein kinase nimA">
    <location>
        <begin position="1"/>
        <end position="699"/>
    </location>
</feature>
<feature type="domain" description="Protein kinase" evidence="1">
    <location>
        <begin position="11"/>
        <end position="295"/>
    </location>
</feature>
<feature type="region of interest" description="Disordered" evidence="3">
    <location>
        <begin position="386"/>
        <end position="463"/>
    </location>
</feature>
<feature type="region of interest" description="Disordered" evidence="3">
    <location>
        <begin position="490"/>
        <end position="538"/>
    </location>
</feature>
<feature type="region of interest" description="Disordered" evidence="3">
    <location>
        <begin position="553"/>
        <end position="617"/>
    </location>
</feature>
<feature type="region of interest" description="Disordered" evidence="3">
    <location>
        <begin position="651"/>
        <end position="685"/>
    </location>
</feature>
<feature type="compositionally biased region" description="Basic and acidic residues" evidence="3">
    <location>
        <begin position="386"/>
        <end position="400"/>
    </location>
</feature>
<feature type="compositionally biased region" description="Low complexity" evidence="3">
    <location>
        <begin position="401"/>
        <end position="424"/>
    </location>
</feature>
<feature type="compositionally biased region" description="Polar residues" evidence="3">
    <location>
        <begin position="425"/>
        <end position="436"/>
    </location>
</feature>
<feature type="compositionally biased region" description="Basic and acidic residues" evidence="3">
    <location>
        <begin position="667"/>
        <end position="683"/>
    </location>
</feature>
<feature type="active site" description="Proton acceptor" evidence="1 2">
    <location>
        <position position="166"/>
    </location>
</feature>
<feature type="binding site" evidence="1">
    <location>
        <begin position="17"/>
        <end position="25"/>
    </location>
    <ligand>
        <name>ATP</name>
        <dbReference type="ChEBI" id="CHEBI:30616"/>
    </ligand>
</feature>
<feature type="binding site" evidence="1">
    <location>
        <position position="40"/>
    </location>
    <ligand>
        <name>ATP</name>
        <dbReference type="ChEBI" id="CHEBI:30616"/>
    </ligand>
</feature>
<feature type="modified residue" description="Phosphothreonine; by autocatalysis" evidence="4">
    <location>
        <position position="199"/>
    </location>
</feature>
<feature type="mutagenesis site" description="No loss of activity." evidence="4">
    <original>C</original>
    <variation>S</variation>
    <variation>A</variation>
    <location>
        <position position="38"/>
    </location>
</feature>
<feature type="mutagenesis site" description="In NIMA7; block in G2." evidence="4">
    <original>E</original>
    <variation>G</variation>
    <location>
        <position position="41"/>
    </location>
</feature>
<feature type="mutagenesis site" description="In NIMA5; block in G2." evidence="4">
    <original>Y</original>
    <variation>N</variation>
    <location>
        <position position="91"/>
    </location>
</feature>
<feature type="mutagenesis site" description="Great decrease in activity." evidence="4">
    <original>T</original>
    <variation>A</variation>
    <location>
        <position position="199"/>
    </location>
</feature>
<feature type="mutagenesis site" description="In NIMA1; block in G2." evidence="4">
    <original>L</original>
    <variation>P</variation>
    <location>
        <position position="304"/>
    </location>
</feature>
<name>NIMA_EMENI</name>